<gene>
    <name evidence="1" type="primary">aroE</name>
    <name type="ordered locus">CBO2540</name>
    <name type="ordered locus">CLC_2398</name>
</gene>
<proteinExistence type="inferred from homology"/>
<keyword id="KW-0028">Amino-acid biosynthesis</keyword>
<keyword id="KW-0057">Aromatic amino acid biosynthesis</keyword>
<keyword id="KW-0521">NADP</keyword>
<keyword id="KW-0560">Oxidoreductase</keyword>
<keyword id="KW-1185">Reference proteome</keyword>
<protein>
    <recommendedName>
        <fullName evidence="1">Shikimate dehydrogenase (NADP(+))</fullName>
        <shortName evidence="1">SDH</shortName>
        <ecNumber evidence="1">1.1.1.25</ecNumber>
    </recommendedName>
</protein>
<accession>A5I4X1</accession>
<accession>A7G626</accession>
<comment type="function">
    <text evidence="1">Involved in the biosynthesis of the chorismate, which leads to the biosynthesis of aromatic amino acids. Catalyzes the reversible NADPH linked reduction of 3-dehydroshikimate (DHSA) to yield shikimate (SA).</text>
</comment>
<comment type="catalytic activity">
    <reaction evidence="1">
        <text>shikimate + NADP(+) = 3-dehydroshikimate + NADPH + H(+)</text>
        <dbReference type="Rhea" id="RHEA:17737"/>
        <dbReference type="ChEBI" id="CHEBI:15378"/>
        <dbReference type="ChEBI" id="CHEBI:16630"/>
        <dbReference type="ChEBI" id="CHEBI:36208"/>
        <dbReference type="ChEBI" id="CHEBI:57783"/>
        <dbReference type="ChEBI" id="CHEBI:58349"/>
        <dbReference type="EC" id="1.1.1.25"/>
    </reaction>
</comment>
<comment type="pathway">
    <text evidence="1">Metabolic intermediate biosynthesis; chorismate biosynthesis; chorismate from D-erythrose 4-phosphate and phosphoenolpyruvate: step 4/7.</text>
</comment>
<comment type="subunit">
    <text evidence="1">Homodimer.</text>
</comment>
<comment type="similarity">
    <text evidence="1">Belongs to the shikimate dehydrogenase family.</text>
</comment>
<organism>
    <name type="scientific">Clostridium botulinum (strain Hall / ATCC 3502 / NCTC 13319 / Type A)</name>
    <dbReference type="NCBI Taxonomy" id="441771"/>
    <lineage>
        <taxon>Bacteria</taxon>
        <taxon>Bacillati</taxon>
        <taxon>Bacillota</taxon>
        <taxon>Clostridia</taxon>
        <taxon>Eubacteriales</taxon>
        <taxon>Clostridiaceae</taxon>
        <taxon>Clostridium</taxon>
    </lineage>
</organism>
<name>AROE_CLOBH</name>
<evidence type="ECO:0000255" key="1">
    <source>
        <dbReference type="HAMAP-Rule" id="MF_00222"/>
    </source>
</evidence>
<reference key="1">
    <citation type="journal article" date="2007" name="Genome Res.">
        <title>Genome sequence of a proteolytic (Group I) Clostridium botulinum strain Hall A and comparative analysis of the clostridial genomes.</title>
        <authorList>
            <person name="Sebaihia M."/>
            <person name="Peck M.W."/>
            <person name="Minton N.P."/>
            <person name="Thomson N.R."/>
            <person name="Holden M.T.G."/>
            <person name="Mitchell W.J."/>
            <person name="Carter A.T."/>
            <person name="Bentley S.D."/>
            <person name="Mason D.R."/>
            <person name="Crossman L."/>
            <person name="Paul C.J."/>
            <person name="Ivens A."/>
            <person name="Wells-Bennik M.H.J."/>
            <person name="Davis I.J."/>
            <person name="Cerdeno-Tarraga A.M."/>
            <person name="Churcher C."/>
            <person name="Quail M.A."/>
            <person name="Chillingworth T."/>
            <person name="Feltwell T."/>
            <person name="Fraser A."/>
            <person name="Goodhead I."/>
            <person name="Hance Z."/>
            <person name="Jagels K."/>
            <person name="Larke N."/>
            <person name="Maddison M."/>
            <person name="Moule S."/>
            <person name="Mungall K."/>
            <person name="Norbertczak H."/>
            <person name="Rabbinowitsch E."/>
            <person name="Sanders M."/>
            <person name="Simmonds M."/>
            <person name="White B."/>
            <person name="Whithead S."/>
            <person name="Parkhill J."/>
        </authorList>
    </citation>
    <scope>NUCLEOTIDE SEQUENCE [LARGE SCALE GENOMIC DNA]</scope>
    <source>
        <strain>Hall / ATCC 3502 / NCTC 13319 / Type A</strain>
    </source>
</reference>
<reference key="2">
    <citation type="journal article" date="2007" name="PLoS ONE">
        <title>Analysis of the neurotoxin complex genes in Clostridium botulinum A1-A4 and B1 strains: BoNT/A3, /Ba4 and /B1 clusters are located within plasmids.</title>
        <authorList>
            <person name="Smith T.J."/>
            <person name="Hill K.K."/>
            <person name="Foley B.T."/>
            <person name="Detter J.C."/>
            <person name="Munk A.C."/>
            <person name="Bruce D.C."/>
            <person name="Doggett N.A."/>
            <person name="Smith L.A."/>
            <person name="Marks J.D."/>
            <person name="Xie G."/>
            <person name="Brettin T.S."/>
        </authorList>
    </citation>
    <scope>NUCLEOTIDE SEQUENCE [LARGE SCALE GENOMIC DNA]</scope>
    <source>
        <strain>Hall / ATCC 3502 / NCTC 13319 / Type A</strain>
    </source>
</reference>
<dbReference type="EC" id="1.1.1.25" evidence="1"/>
<dbReference type="EMBL" id="CP000727">
    <property type="protein sequence ID" value="ABS37187.1"/>
    <property type="molecule type" value="Genomic_DNA"/>
</dbReference>
<dbReference type="EMBL" id="AM412317">
    <property type="protein sequence ID" value="CAL84094.1"/>
    <property type="molecule type" value="Genomic_DNA"/>
</dbReference>
<dbReference type="RefSeq" id="WP_011986860.1">
    <property type="nucleotide sequence ID" value="NC_009698.1"/>
</dbReference>
<dbReference type="RefSeq" id="YP_001255038.1">
    <property type="nucleotide sequence ID" value="NC_009495.1"/>
</dbReference>
<dbReference type="RefSeq" id="YP_001388241.1">
    <property type="nucleotide sequence ID" value="NC_009698.1"/>
</dbReference>
<dbReference type="SMR" id="A5I4X1"/>
<dbReference type="GeneID" id="5187986"/>
<dbReference type="KEGG" id="cbh:CLC_2398"/>
<dbReference type="KEGG" id="cbo:CBO2540"/>
<dbReference type="PATRIC" id="fig|413999.7.peg.2520"/>
<dbReference type="HOGENOM" id="CLU_044063_4_1_9"/>
<dbReference type="UniPathway" id="UPA00053">
    <property type="reaction ID" value="UER00087"/>
</dbReference>
<dbReference type="PRO" id="PR:A5I4X1"/>
<dbReference type="Proteomes" id="UP000001986">
    <property type="component" value="Chromosome"/>
</dbReference>
<dbReference type="GO" id="GO:0005829">
    <property type="term" value="C:cytosol"/>
    <property type="evidence" value="ECO:0000318"/>
    <property type="project" value="GO_Central"/>
</dbReference>
<dbReference type="GO" id="GO:0050661">
    <property type="term" value="F:NADP binding"/>
    <property type="evidence" value="ECO:0000318"/>
    <property type="project" value="GO_Central"/>
</dbReference>
<dbReference type="GO" id="GO:0004764">
    <property type="term" value="F:shikimate 3-dehydrogenase (NADP+) activity"/>
    <property type="evidence" value="ECO:0000318"/>
    <property type="project" value="GO_Central"/>
</dbReference>
<dbReference type="GO" id="GO:0008652">
    <property type="term" value="P:amino acid biosynthetic process"/>
    <property type="evidence" value="ECO:0007669"/>
    <property type="project" value="UniProtKB-KW"/>
</dbReference>
<dbReference type="GO" id="GO:0009073">
    <property type="term" value="P:aromatic amino acid family biosynthetic process"/>
    <property type="evidence" value="ECO:0007669"/>
    <property type="project" value="UniProtKB-KW"/>
</dbReference>
<dbReference type="GO" id="GO:0009423">
    <property type="term" value="P:chorismate biosynthetic process"/>
    <property type="evidence" value="ECO:0000318"/>
    <property type="project" value="GO_Central"/>
</dbReference>
<dbReference type="GO" id="GO:0019632">
    <property type="term" value="P:shikimate metabolic process"/>
    <property type="evidence" value="ECO:0000318"/>
    <property type="project" value="GO_Central"/>
</dbReference>
<dbReference type="CDD" id="cd01065">
    <property type="entry name" value="NAD_bind_Shikimate_DH"/>
    <property type="match status" value="1"/>
</dbReference>
<dbReference type="FunFam" id="3.40.50.720:FF:000853">
    <property type="entry name" value="Shikimate dehydrogenase (NADP(+))"/>
    <property type="match status" value="1"/>
</dbReference>
<dbReference type="Gene3D" id="3.40.50.10860">
    <property type="entry name" value="Leucine Dehydrogenase, chain A, domain 1"/>
    <property type="match status" value="1"/>
</dbReference>
<dbReference type="Gene3D" id="3.40.50.720">
    <property type="entry name" value="NAD(P)-binding Rossmann-like Domain"/>
    <property type="match status" value="1"/>
</dbReference>
<dbReference type="HAMAP" id="MF_00222">
    <property type="entry name" value="Shikimate_DH_AroE"/>
    <property type="match status" value="1"/>
</dbReference>
<dbReference type="InterPro" id="IPR046346">
    <property type="entry name" value="Aminoacid_DH-like_N_sf"/>
</dbReference>
<dbReference type="InterPro" id="IPR036291">
    <property type="entry name" value="NAD(P)-bd_dom_sf"/>
</dbReference>
<dbReference type="InterPro" id="IPR011342">
    <property type="entry name" value="Shikimate_DH"/>
</dbReference>
<dbReference type="InterPro" id="IPR013708">
    <property type="entry name" value="Shikimate_DH-bd_N"/>
</dbReference>
<dbReference type="InterPro" id="IPR022893">
    <property type="entry name" value="Shikimate_DH_fam"/>
</dbReference>
<dbReference type="InterPro" id="IPR006151">
    <property type="entry name" value="Shikm_DH/Glu-tRNA_Rdtase"/>
</dbReference>
<dbReference type="NCBIfam" id="TIGR00507">
    <property type="entry name" value="aroE"/>
    <property type="match status" value="1"/>
</dbReference>
<dbReference type="PANTHER" id="PTHR21089:SF1">
    <property type="entry name" value="BIFUNCTIONAL 3-DEHYDROQUINATE DEHYDRATASE_SHIKIMATE DEHYDROGENASE, CHLOROPLASTIC"/>
    <property type="match status" value="1"/>
</dbReference>
<dbReference type="PANTHER" id="PTHR21089">
    <property type="entry name" value="SHIKIMATE DEHYDROGENASE"/>
    <property type="match status" value="1"/>
</dbReference>
<dbReference type="Pfam" id="PF01488">
    <property type="entry name" value="Shikimate_DH"/>
    <property type="match status" value="1"/>
</dbReference>
<dbReference type="Pfam" id="PF08501">
    <property type="entry name" value="Shikimate_dh_N"/>
    <property type="match status" value="1"/>
</dbReference>
<dbReference type="SUPFAM" id="SSF53223">
    <property type="entry name" value="Aminoacid dehydrogenase-like, N-terminal domain"/>
    <property type="match status" value="1"/>
</dbReference>
<dbReference type="SUPFAM" id="SSF51735">
    <property type="entry name" value="NAD(P)-binding Rossmann-fold domains"/>
    <property type="match status" value="1"/>
</dbReference>
<feature type="chain" id="PRO_1000021275" description="Shikimate dehydrogenase (NADP(+))">
    <location>
        <begin position="1"/>
        <end position="258"/>
    </location>
</feature>
<feature type="active site" description="Proton acceptor" evidence="1">
    <location>
        <position position="65"/>
    </location>
</feature>
<feature type="binding site" evidence="1">
    <location>
        <begin position="14"/>
        <end position="16"/>
    </location>
    <ligand>
        <name>shikimate</name>
        <dbReference type="ChEBI" id="CHEBI:36208"/>
    </ligand>
</feature>
<feature type="binding site" evidence="1">
    <location>
        <position position="61"/>
    </location>
    <ligand>
        <name>shikimate</name>
        <dbReference type="ChEBI" id="CHEBI:36208"/>
    </ligand>
</feature>
<feature type="binding site" evidence="1">
    <location>
        <position position="86"/>
    </location>
    <ligand>
        <name>shikimate</name>
        <dbReference type="ChEBI" id="CHEBI:36208"/>
    </ligand>
</feature>
<feature type="binding site" evidence="1">
    <location>
        <position position="101"/>
    </location>
    <ligand>
        <name>shikimate</name>
        <dbReference type="ChEBI" id="CHEBI:36208"/>
    </ligand>
</feature>
<feature type="binding site" evidence="1">
    <location>
        <begin position="125"/>
        <end position="129"/>
    </location>
    <ligand>
        <name>NADP(+)</name>
        <dbReference type="ChEBI" id="CHEBI:58349"/>
    </ligand>
</feature>
<feature type="binding site" evidence="1">
    <location>
        <position position="211"/>
    </location>
    <ligand>
        <name>NADP(+)</name>
        <dbReference type="ChEBI" id="CHEBI:58349"/>
    </ligand>
</feature>
<feature type="binding site" evidence="1">
    <location>
        <position position="213"/>
    </location>
    <ligand>
        <name>shikimate</name>
        <dbReference type="ChEBI" id="CHEBI:36208"/>
    </ligand>
</feature>
<feature type="binding site" evidence="1">
    <location>
        <position position="234"/>
    </location>
    <ligand>
        <name>NADP(+)</name>
        <dbReference type="ChEBI" id="CHEBI:58349"/>
    </ligand>
</feature>
<sequence>MYTTGLIGKNINYSESPEIHNNYYKKNNIPFFYKIFNLKQDQIDDFIKNLHKNNIKGFNVTIPYKETILQYLNDIVYPADKIGAVNTVAVQEDKLIGYNTDYIGFIKSLQYYNIQVKNFKCLIIGSGGSAKCIYYALKELNARDICIVSRNPEKARLKFEKKVKILNIKDENKLDRYDLIVNCTPIGGPNLKEQKPIELKEIKKNCVVYDLNYTPKRSKLLKEAKENGAFIINGEKMLIFQAYSAIGLWCLNGIKGGR</sequence>